<comment type="function">
    <text evidence="1">One of the components of the core complex of photosystem II (PSII). PSII is a light-driven water:plastoquinone oxidoreductase that uses light energy to abstract electrons from H(2)O, generating O(2) and a proton gradient subsequently used for ATP formation. It consists of a core antenna complex that captures photons, and an electron transfer chain that converts photonic excitation into a charge separation. This subunit is found at the monomer-monomer interface and is required for correct PSII assembly and/or dimerization.</text>
</comment>
<comment type="subunit">
    <text evidence="1">PSII is composed of 1 copy each of membrane proteins PsbA, PsbB, PsbC, PsbD, PsbE, PsbF, PsbH, PsbI, PsbJ, PsbK, PsbL, PsbM, PsbT, PsbX, PsbY, PsbZ, Psb30/Ycf12, at least 3 peripheral proteins of the oxygen-evolving complex and a large number of cofactors. It forms dimeric complexes.</text>
</comment>
<comment type="subcellular location">
    <subcellularLocation>
        <location evidence="1">Plastid</location>
        <location evidence="1">Chloroplast thylakoid membrane</location>
        <topology evidence="1">Single-pass membrane protein</topology>
    </subcellularLocation>
</comment>
<comment type="similarity">
    <text evidence="1">Belongs to the PsbL family.</text>
</comment>
<keyword id="KW-0150">Chloroplast</keyword>
<keyword id="KW-0472">Membrane</keyword>
<keyword id="KW-0602">Photosynthesis</keyword>
<keyword id="KW-0604">Photosystem II</keyword>
<keyword id="KW-0934">Plastid</keyword>
<keyword id="KW-0674">Reaction center</keyword>
<keyword id="KW-0793">Thylakoid</keyword>
<keyword id="KW-0812">Transmembrane</keyword>
<keyword id="KW-1133">Transmembrane helix</keyword>
<organism>
    <name type="scientific">Pyropia yezoensis</name>
    <name type="common">Susabi-nori</name>
    <name type="synonym">Porphyra yezoensis</name>
    <dbReference type="NCBI Taxonomy" id="2788"/>
    <lineage>
        <taxon>Eukaryota</taxon>
        <taxon>Rhodophyta</taxon>
        <taxon>Bangiophyceae</taxon>
        <taxon>Bangiales</taxon>
        <taxon>Bangiaceae</taxon>
        <taxon>Pyropia</taxon>
    </lineage>
</organism>
<proteinExistence type="inferred from homology"/>
<reference key="1">
    <citation type="submission" date="2003-11" db="EMBL/GenBank/DDBJ databases">
        <title>Whole genome sequence of Porphyra yezoensis chloroplast.</title>
        <authorList>
            <person name="Kunimoto M."/>
            <person name="Morishima K."/>
            <person name="Yoshikawa M."/>
            <person name="Fukuda S."/>
            <person name="Kobayashi T."/>
            <person name="Kobayashi M."/>
            <person name="Okazaki T."/>
            <person name="Ohara I."/>
            <person name="Nakayama I."/>
        </authorList>
    </citation>
    <scope>NUCLEOTIDE SEQUENCE [LARGE SCALE GENOMIC DNA]</scope>
    <source>
        <strain>U-51</strain>
    </source>
</reference>
<geneLocation type="chloroplast"/>
<protein>
    <recommendedName>
        <fullName evidence="1">Photosystem II reaction center protein L</fullName>
        <shortName evidence="1">PSII-L</shortName>
    </recommendedName>
</protein>
<sequence>MSGPNPNKEPVDLNRTSLFWGLLLIFVLAVLFSSYFFN</sequence>
<dbReference type="EMBL" id="AP006715">
    <property type="protein sequence ID" value="BAE92513.1"/>
    <property type="molecule type" value="Genomic_DNA"/>
</dbReference>
<dbReference type="RefSeq" id="YP_537070.1">
    <property type="nucleotide sequence ID" value="NC_007932.1"/>
</dbReference>
<dbReference type="SMR" id="Q1XD98"/>
<dbReference type="GeneID" id="3978786"/>
<dbReference type="GO" id="GO:0009535">
    <property type="term" value="C:chloroplast thylakoid membrane"/>
    <property type="evidence" value="ECO:0007669"/>
    <property type="project" value="UniProtKB-SubCell"/>
</dbReference>
<dbReference type="GO" id="GO:0009539">
    <property type="term" value="C:photosystem II reaction center"/>
    <property type="evidence" value="ECO:0007669"/>
    <property type="project" value="InterPro"/>
</dbReference>
<dbReference type="GO" id="GO:0015979">
    <property type="term" value="P:photosynthesis"/>
    <property type="evidence" value="ECO:0007669"/>
    <property type="project" value="UniProtKB-UniRule"/>
</dbReference>
<dbReference type="HAMAP" id="MF_01317">
    <property type="entry name" value="PSII_PsbL"/>
    <property type="match status" value="1"/>
</dbReference>
<dbReference type="InterPro" id="IPR003372">
    <property type="entry name" value="PSII_PsbL"/>
</dbReference>
<dbReference type="InterPro" id="IPR037266">
    <property type="entry name" value="PSII_PsbL_sf"/>
</dbReference>
<dbReference type="NCBIfam" id="NF001972">
    <property type="entry name" value="PRK00753.1"/>
    <property type="match status" value="1"/>
</dbReference>
<dbReference type="Pfam" id="PF02419">
    <property type="entry name" value="PsbL"/>
    <property type="match status" value="1"/>
</dbReference>
<dbReference type="SUPFAM" id="SSF161017">
    <property type="entry name" value="Photosystem II reaction center protein L, PsbL"/>
    <property type="match status" value="1"/>
</dbReference>
<name>PSBL_PYRYE</name>
<accession>Q1XD98</accession>
<evidence type="ECO:0000255" key="1">
    <source>
        <dbReference type="HAMAP-Rule" id="MF_01317"/>
    </source>
</evidence>
<feature type="chain" id="PRO_0000276228" description="Photosystem II reaction center protein L">
    <location>
        <begin position="1"/>
        <end position="38"/>
    </location>
</feature>
<feature type="transmembrane region" description="Helical" evidence="1">
    <location>
        <begin position="17"/>
        <end position="37"/>
    </location>
</feature>
<gene>
    <name evidence="1" type="primary">psbL</name>
</gene>